<accession>B7NRM2</accession>
<evidence type="ECO:0000255" key="1">
    <source>
        <dbReference type="HAMAP-Rule" id="MF_00071"/>
    </source>
</evidence>
<sequence length="599" mass="66570">MKNIRNFSIIAHIDHGKSTLSDRIIQICGGLSDREMEAQVLDSMDLERERGITIKAQSVTLDYKASDGETYQLNFIDTPGHVDFSYEVSRSLAACEGALLVVDAGQGVEAQTLANCYTAMEMDLEVVPVLNKIDLPAADPERVAEEIEDIVGIDATDAVRCSAKTGVGVQDVLERLVRDIPPPEGDPEGPLQALIIDSWFDNYLGVVSLIRIKNGTLRKGDKVKVMSTGQTYNADRLGIFTPKQVDRTELKCGEVGWLVCAIKDIHGAPVGDTLTLARNPAEKALPGFKKVKPQVYAGLFPVSSDDYEAFRDALGKLSLNDASLFYEPESSSALGFGFRCGFLGLLHMEIIQERLEREYDLDLITTAPTVVYEVETTSREVIYVDSPSKLPAVNNIYELREPIAECHMLLPQAYLGNVITLCVEKRGVQTNMVYHGNQVALTYEIPMAEVVLDFFDRLKSTSRGYASLDYNFKRFQASDMVRVDVLINGERVDALALITHRDNSQNRGRELVEKMKDLIPRQQFDIAIQAAIGTHIIARSTVKQLRKNVLAKCYGGDISRKKKLLQKQKEGKKRMKQIGNVELPQEAFLAILHVGKDNK</sequence>
<comment type="function">
    <text evidence="1">Required for accurate and efficient protein synthesis under certain stress conditions. May act as a fidelity factor of the translation reaction, by catalyzing a one-codon backward translocation of tRNAs on improperly translocated ribosomes. Back-translocation proceeds from a post-translocation (POST) complex to a pre-translocation (PRE) complex, thus giving elongation factor G a second chance to translocate the tRNAs correctly. Binds to ribosomes in a GTP-dependent manner.</text>
</comment>
<comment type="catalytic activity">
    <reaction evidence="1">
        <text>GTP + H2O = GDP + phosphate + H(+)</text>
        <dbReference type="Rhea" id="RHEA:19669"/>
        <dbReference type="ChEBI" id="CHEBI:15377"/>
        <dbReference type="ChEBI" id="CHEBI:15378"/>
        <dbReference type="ChEBI" id="CHEBI:37565"/>
        <dbReference type="ChEBI" id="CHEBI:43474"/>
        <dbReference type="ChEBI" id="CHEBI:58189"/>
        <dbReference type="EC" id="3.6.5.n1"/>
    </reaction>
</comment>
<comment type="subcellular location">
    <subcellularLocation>
        <location evidence="1">Cell inner membrane</location>
        <topology evidence="1">Peripheral membrane protein</topology>
        <orientation evidence="1">Cytoplasmic side</orientation>
    </subcellularLocation>
</comment>
<comment type="similarity">
    <text evidence="1">Belongs to the TRAFAC class translation factor GTPase superfamily. Classic translation factor GTPase family. LepA subfamily.</text>
</comment>
<proteinExistence type="inferred from homology"/>
<feature type="chain" id="PRO_1000117022" description="Elongation factor 4">
    <location>
        <begin position="1"/>
        <end position="599"/>
    </location>
</feature>
<feature type="domain" description="tr-type G">
    <location>
        <begin position="2"/>
        <end position="184"/>
    </location>
</feature>
<feature type="binding site" evidence="1">
    <location>
        <begin position="14"/>
        <end position="19"/>
    </location>
    <ligand>
        <name>GTP</name>
        <dbReference type="ChEBI" id="CHEBI:37565"/>
    </ligand>
</feature>
<feature type="binding site" evidence="1">
    <location>
        <begin position="131"/>
        <end position="134"/>
    </location>
    <ligand>
        <name>GTP</name>
        <dbReference type="ChEBI" id="CHEBI:37565"/>
    </ligand>
</feature>
<keyword id="KW-0997">Cell inner membrane</keyword>
<keyword id="KW-1003">Cell membrane</keyword>
<keyword id="KW-0342">GTP-binding</keyword>
<keyword id="KW-0378">Hydrolase</keyword>
<keyword id="KW-0472">Membrane</keyword>
<keyword id="KW-0547">Nucleotide-binding</keyword>
<keyword id="KW-0648">Protein biosynthesis</keyword>
<name>LEPA_ECO7I</name>
<dbReference type="EC" id="3.6.5.n1" evidence="1"/>
<dbReference type="EMBL" id="CU928164">
    <property type="protein sequence ID" value="CAR18896.1"/>
    <property type="molecule type" value="Genomic_DNA"/>
</dbReference>
<dbReference type="RefSeq" id="WP_000790168.1">
    <property type="nucleotide sequence ID" value="NC_011750.1"/>
</dbReference>
<dbReference type="RefSeq" id="YP_002408712.1">
    <property type="nucleotide sequence ID" value="NC_011750.1"/>
</dbReference>
<dbReference type="SMR" id="B7NRM2"/>
<dbReference type="STRING" id="585057.ECIAI39_2774"/>
<dbReference type="GeneID" id="93774522"/>
<dbReference type="KEGG" id="ect:ECIAI39_2774"/>
<dbReference type="PATRIC" id="fig|585057.6.peg.2882"/>
<dbReference type="HOGENOM" id="CLU_009995_3_3_6"/>
<dbReference type="Proteomes" id="UP000000749">
    <property type="component" value="Chromosome"/>
</dbReference>
<dbReference type="GO" id="GO:0005886">
    <property type="term" value="C:plasma membrane"/>
    <property type="evidence" value="ECO:0007669"/>
    <property type="project" value="UniProtKB-SubCell"/>
</dbReference>
<dbReference type="GO" id="GO:0005525">
    <property type="term" value="F:GTP binding"/>
    <property type="evidence" value="ECO:0007669"/>
    <property type="project" value="UniProtKB-UniRule"/>
</dbReference>
<dbReference type="GO" id="GO:0003924">
    <property type="term" value="F:GTPase activity"/>
    <property type="evidence" value="ECO:0007669"/>
    <property type="project" value="UniProtKB-UniRule"/>
</dbReference>
<dbReference type="GO" id="GO:0097216">
    <property type="term" value="F:guanosine tetraphosphate binding"/>
    <property type="evidence" value="ECO:0007669"/>
    <property type="project" value="UniProtKB-ARBA"/>
</dbReference>
<dbReference type="GO" id="GO:0043022">
    <property type="term" value="F:ribosome binding"/>
    <property type="evidence" value="ECO:0007669"/>
    <property type="project" value="UniProtKB-UniRule"/>
</dbReference>
<dbReference type="GO" id="GO:0003746">
    <property type="term" value="F:translation elongation factor activity"/>
    <property type="evidence" value="ECO:0007669"/>
    <property type="project" value="UniProtKB-UniRule"/>
</dbReference>
<dbReference type="GO" id="GO:0045727">
    <property type="term" value="P:positive regulation of translation"/>
    <property type="evidence" value="ECO:0007669"/>
    <property type="project" value="UniProtKB-UniRule"/>
</dbReference>
<dbReference type="CDD" id="cd03699">
    <property type="entry name" value="EF4_II"/>
    <property type="match status" value="1"/>
</dbReference>
<dbReference type="CDD" id="cd16260">
    <property type="entry name" value="EF4_III"/>
    <property type="match status" value="1"/>
</dbReference>
<dbReference type="CDD" id="cd01890">
    <property type="entry name" value="LepA"/>
    <property type="match status" value="1"/>
</dbReference>
<dbReference type="CDD" id="cd03709">
    <property type="entry name" value="lepA_C"/>
    <property type="match status" value="1"/>
</dbReference>
<dbReference type="FunFam" id="3.30.70.240:FF:000005">
    <property type="entry name" value="Elongation factor 4"/>
    <property type="match status" value="1"/>
</dbReference>
<dbReference type="FunFam" id="3.40.50.300:FF:000078">
    <property type="entry name" value="Elongation factor 4"/>
    <property type="match status" value="1"/>
</dbReference>
<dbReference type="FunFam" id="2.40.30.10:FF:000015">
    <property type="entry name" value="Translation factor GUF1, mitochondrial"/>
    <property type="match status" value="1"/>
</dbReference>
<dbReference type="FunFam" id="3.30.70.2570:FF:000001">
    <property type="entry name" value="Translation factor GUF1, mitochondrial"/>
    <property type="match status" value="1"/>
</dbReference>
<dbReference type="FunFam" id="3.30.70.870:FF:000004">
    <property type="entry name" value="Translation factor GUF1, mitochondrial"/>
    <property type="match status" value="1"/>
</dbReference>
<dbReference type="Gene3D" id="3.30.70.240">
    <property type="match status" value="1"/>
</dbReference>
<dbReference type="Gene3D" id="3.30.70.2570">
    <property type="entry name" value="Elongation factor 4, C-terminal domain"/>
    <property type="match status" value="1"/>
</dbReference>
<dbReference type="Gene3D" id="3.30.70.870">
    <property type="entry name" value="Elongation Factor G (Translational Gtpase), domain 3"/>
    <property type="match status" value="1"/>
</dbReference>
<dbReference type="Gene3D" id="3.40.50.300">
    <property type="entry name" value="P-loop containing nucleotide triphosphate hydrolases"/>
    <property type="match status" value="1"/>
</dbReference>
<dbReference type="Gene3D" id="2.40.30.10">
    <property type="entry name" value="Translation factors"/>
    <property type="match status" value="1"/>
</dbReference>
<dbReference type="HAMAP" id="MF_00071">
    <property type="entry name" value="LepA"/>
    <property type="match status" value="1"/>
</dbReference>
<dbReference type="InterPro" id="IPR006297">
    <property type="entry name" value="EF-4"/>
</dbReference>
<dbReference type="InterPro" id="IPR035647">
    <property type="entry name" value="EFG_III/V"/>
</dbReference>
<dbReference type="InterPro" id="IPR000640">
    <property type="entry name" value="EFG_V-like"/>
</dbReference>
<dbReference type="InterPro" id="IPR004161">
    <property type="entry name" value="EFTu-like_2"/>
</dbReference>
<dbReference type="InterPro" id="IPR031157">
    <property type="entry name" value="G_TR_CS"/>
</dbReference>
<dbReference type="InterPro" id="IPR038363">
    <property type="entry name" value="LepA_C_sf"/>
</dbReference>
<dbReference type="InterPro" id="IPR013842">
    <property type="entry name" value="LepA_CTD"/>
</dbReference>
<dbReference type="InterPro" id="IPR035654">
    <property type="entry name" value="LepA_IV"/>
</dbReference>
<dbReference type="InterPro" id="IPR027417">
    <property type="entry name" value="P-loop_NTPase"/>
</dbReference>
<dbReference type="InterPro" id="IPR005225">
    <property type="entry name" value="Small_GTP-bd"/>
</dbReference>
<dbReference type="InterPro" id="IPR000795">
    <property type="entry name" value="T_Tr_GTP-bd_dom"/>
</dbReference>
<dbReference type="NCBIfam" id="TIGR01393">
    <property type="entry name" value="lepA"/>
    <property type="match status" value="1"/>
</dbReference>
<dbReference type="NCBIfam" id="TIGR00231">
    <property type="entry name" value="small_GTP"/>
    <property type="match status" value="1"/>
</dbReference>
<dbReference type="PANTHER" id="PTHR43512:SF4">
    <property type="entry name" value="TRANSLATION FACTOR GUF1 HOMOLOG, CHLOROPLASTIC"/>
    <property type="match status" value="1"/>
</dbReference>
<dbReference type="PANTHER" id="PTHR43512">
    <property type="entry name" value="TRANSLATION FACTOR GUF1-RELATED"/>
    <property type="match status" value="1"/>
</dbReference>
<dbReference type="Pfam" id="PF00679">
    <property type="entry name" value="EFG_C"/>
    <property type="match status" value="1"/>
</dbReference>
<dbReference type="Pfam" id="PF00009">
    <property type="entry name" value="GTP_EFTU"/>
    <property type="match status" value="1"/>
</dbReference>
<dbReference type="Pfam" id="PF03144">
    <property type="entry name" value="GTP_EFTU_D2"/>
    <property type="match status" value="1"/>
</dbReference>
<dbReference type="Pfam" id="PF06421">
    <property type="entry name" value="LepA_C"/>
    <property type="match status" value="1"/>
</dbReference>
<dbReference type="PRINTS" id="PR00315">
    <property type="entry name" value="ELONGATNFCT"/>
</dbReference>
<dbReference type="SUPFAM" id="SSF54980">
    <property type="entry name" value="EF-G C-terminal domain-like"/>
    <property type="match status" value="2"/>
</dbReference>
<dbReference type="SUPFAM" id="SSF52540">
    <property type="entry name" value="P-loop containing nucleoside triphosphate hydrolases"/>
    <property type="match status" value="1"/>
</dbReference>
<dbReference type="PROSITE" id="PS00301">
    <property type="entry name" value="G_TR_1"/>
    <property type="match status" value="1"/>
</dbReference>
<dbReference type="PROSITE" id="PS51722">
    <property type="entry name" value="G_TR_2"/>
    <property type="match status" value="1"/>
</dbReference>
<protein>
    <recommendedName>
        <fullName evidence="1">Elongation factor 4</fullName>
        <shortName evidence="1">EF-4</shortName>
        <ecNumber evidence="1">3.6.5.n1</ecNumber>
    </recommendedName>
    <alternativeName>
        <fullName evidence="1">Ribosomal back-translocase LepA</fullName>
    </alternativeName>
</protein>
<reference key="1">
    <citation type="journal article" date="2009" name="PLoS Genet.">
        <title>Organised genome dynamics in the Escherichia coli species results in highly diverse adaptive paths.</title>
        <authorList>
            <person name="Touchon M."/>
            <person name="Hoede C."/>
            <person name="Tenaillon O."/>
            <person name="Barbe V."/>
            <person name="Baeriswyl S."/>
            <person name="Bidet P."/>
            <person name="Bingen E."/>
            <person name="Bonacorsi S."/>
            <person name="Bouchier C."/>
            <person name="Bouvet O."/>
            <person name="Calteau A."/>
            <person name="Chiapello H."/>
            <person name="Clermont O."/>
            <person name="Cruveiller S."/>
            <person name="Danchin A."/>
            <person name="Diard M."/>
            <person name="Dossat C."/>
            <person name="Karoui M.E."/>
            <person name="Frapy E."/>
            <person name="Garry L."/>
            <person name="Ghigo J.M."/>
            <person name="Gilles A.M."/>
            <person name="Johnson J."/>
            <person name="Le Bouguenec C."/>
            <person name="Lescat M."/>
            <person name="Mangenot S."/>
            <person name="Martinez-Jehanne V."/>
            <person name="Matic I."/>
            <person name="Nassif X."/>
            <person name="Oztas S."/>
            <person name="Petit M.A."/>
            <person name="Pichon C."/>
            <person name="Rouy Z."/>
            <person name="Ruf C.S."/>
            <person name="Schneider D."/>
            <person name="Tourret J."/>
            <person name="Vacherie B."/>
            <person name="Vallenet D."/>
            <person name="Medigue C."/>
            <person name="Rocha E.P.C."/>
            <person name="Denamur E."/>
        </authorList>
    </citation>
    <scope>NUCLEOTIDE SEQUENCE [LARGE SCALE GENOMIC DNA]</scope>
    <source>
        <strain>IAI39 / ExPEC</strain>
    </source>
</reference>
<gene>
    <name evidence="1" type="primary">lepA</name>
    <name type="ordered locus">ECIAI39_2774</name>
</gene>
<organism>
    <name type="scientific">Escherichia coli O7:K1 (strain IAI39 / ExPEC)</name>
    <dbReference type="NCBI Taxonomy" id="585057"/>
    <lineage>
        <taxon>Bacteria</taxon>
        <taxon>Pseudomonadati</taxon>
        <taxon>Pseudomonadota</taxon>
        <taxon>Gammaproteobacteria</taxon>
        <taxon>Enterobacterales</taxon>
        <taxon>Enterobacteriaceae</taxon>
        <taxon>Escherichia</taxon>
    </lineage>
</organism>